<reference key="1">
    <citation type="journal article" date="2006" name="J. Bacteriol.">
        <title>Genome sequence of Aeromonas hydrophila ATCC 7966T: jack of all trades.</title>
        <authorList>
            <person name="Seshadri R."/>
            <person name="Joseph S.W."/>
            <person name="Chopra A.K."/>
            <person name="Sha J."/>
            <person name="Shaw J."/>
            <person name="Graf J."/>
            <person name="Haft D.H."/>
            <person name="Wu M."/>
            <person name="Ren Q."/>
            <person name="Rosovitz M.J."/>
            <person name="Madupu R."/>
            <person name="Tallon L."/>
            <person name="Kim M."/>
            <person name="Jin S."/>
            <person name="Vuong H."/>
            <person name="Stine O.C."/>
            <person name="Ali A."/>
            <person name="Horneman A.J."/>
            <person name="Heidelberg J.F."/>
        </authorList>
    </citation>
    <scope>NUCLEOTIDE SEQUENCE [LARGE SCALE GENOMIC DNA]</scope>
    <source>
        <strain>ATCC 7966 / DSM 30187 / BCRC 13018 / CCUG 14551 / JCM 1027 / KCTC 2358 / NCIMB 9240 / NCTC 8049</strain>
    </source>
</reference>
<organism>
    <name type="scientific">Aeromonas hydrophila subsp. hydrophila (strain ATCC 7966 / DSM 30187 / BCRC 13018 / CCUG 14551 / JCM 1027 / KCTC 2358 / NCIMB 9240 / NCTC 8049)</name>
    <dbReference type="NCBI Taxonomy" id="380703"/>
    <lineage>
        <taxon>Bacteria</taxon>
        <taxon>Pseudomonadati</taxon>
        <taxon>Pseudomonadota</taxon>
        <taxon>Gammaproteobacteria</taxon>
        <taxon>Aeromonadales</taxon>
        <taxon>Aeromonadaceae</taxon>
        <taxon>Aeromonas</taxon>
    </lineage>
</organism>
<keyword id="KW-0028">Amino-acid biosynthesis</keyword>
<keyword id="KW-0057">Aromatic amino acid biosynthesis</keyword>
<keyword id="KW-0456">Lyase</keyword>
<keyword id="KW-1185">Reference proteome</keyword>
<keyword id="KW-0822">Tryptophan biosynthesis</keyword>
<proteinExistence type="inferred from homology"/>
<comment type="function">
    <text evidence="1">The alpha subunit is responsible for the aldol cleavage of indoleglycerol phosphate to indole and glyceraldehyde 3-phosphate.</text>
</comment>
<comment type="catalytic activity">
    <reaction evidence="1">
        <text>(1S,2R)-1-C-(indol-3-yl)glycerol 3-phosphate + L-serine = D-glyceraldehyde 3-phosphate + L-tryptophan + H2O</text>
        <dbReference type="Rhea" id="RHEA:10532"/>
        <dbReference type="ChEBI" id="CHEBI:15377"/>
        <dbReference type="ChEBI" id="CHEBI:33384"/>
        <dbReference type="ChEBI" id="CHEBI:57912"/>
        <dbReference type="ChEBI" id="CHEBI:58866"/>
        <dbReference type="ChEBI" id="CHEBI:59776"/>
        <dbReference type="EC" id="4.2.1.20"/>
    </reaction>
</comment>
<comment type="pathway">
    <text evidence="1">Amino-acid biosynthesis; L-tryptophan biosynthesis; L-tryptophan from chorismate: step 5/5.</text>
</comment>
<comment type="subunit">
    <text evidence="1">Tetramer of two alpha and two beta chains.</text>
</comment>
<comment type="similarity">
    <text evidence="1">Belongs to the TrpA family.</text>
</comment>
<accession>A0KMD1</accession>
<sequence length="268" mass="28460">MNRYAQLFSRLDEANQGAFVPFVMLGDPTPELSLAIVDALVAGGADALELGIPFSDPVADGPTIQGAALRAFESHTTPDDCFELLGRIRAKYPQLPIGLLVYANLVYVRKIDGFYEKCQQAGVDSVLVADVPVQMCAPYKAAADKFGIDSIFIAPPNGDAETLKQVAELGNGYTYLVSRAGVTGAETKAGMPVEGLINTLREFNAPPALLGFGISEPTQVREAIAAGAAGAISGSAVVKIIETHHQNPEHMLNRLKEFVEGMKAATNR</sequence>
<dbReference type="EC" id="4.2.1.20" evidence="1"/>
<dbReference type="EMBL" id="CP000462">
    <property type="protein sequence ID" value="ABK36706.1"/>
    <property type="molecule type" value="Genomic_DNA"/>
</dbReference>
<dbReference type="RefSeq" id="WP_011706728.1">
    <property type="nucleotide sequence ID" value="NC_008570.1"/>
</dbReference>
<dbReference type="RefSeq" id="YP_857432.1">
    <property type="nucleotide sequence ID" value="NC_008570.1"/>
</dbReference>
<dbReference type="SMR" id="A0KMD1"/>
<dbReference type="STRING" id="380703.AHA_2928"/>
<dbReference type="EnsemblBacteria" id="ABK36706">
    <property type="protein sequence ID" value="ABK36706"/>
    <property type="gene ID" value="AHA_2928"/>
</dbReference>
<dbReference type="GeneID" id="4487723"/>
<dbReference type="KEGG" id="aha:AHA_2928"/>
<dbReference type="PATRIC" id="fig|380703.7.peg.2926"/>
<dbReference type="eggNOG" id="COG0159">
    <property type="taxonomic scope" value="Bacteria"/>
</dbReference>
<dbReference type="HOGENOM" id="CLU_016734_0_4_6"/>
<dbReference type="OrthoDB" id="9804578at2"/>
<dbReference type="UniPathway" id="UPA00035">
    <property type="reaction ID" value="UER00044"/>
</dbReference>
<dbReference type="Proteomes" id="UP000000756">
    <property type="component" value="Chromosome"/>
</dbReference>
<dbReference type="GO" id="GO:0005829">
    <property type="term" value="C:cytosol"/>
    <property type="evidence" value="ECO:0007669"/>
    <property type="project" value="TreeGrafter"/>
</dbReference>
<dbReference type="GO" id="GO:0004834">
    <property type="term" value="F:tryptophan synthase activity"/>
    <property type="evidence" value="ECO:0007669"/>
    <property type="project" value="UniProtKB-UniRule"/>
</dbReference>
<dbReference type="CDD" id="cd04724">
    <property type="entry name" value="Tryptophan_synthase_alpha"/>
    <property type="match status" value="1"/>
</dbReference>
<dbReference type="FunFam" id="3.20.20.70:FF:000037">
    <property type="entry name" value="Tryptophan synthase alpha chain"/>
    <property type="match status" value="1"/>
</dbReference>
<dbReference type="Gene3D" id="3.20.20.70">
    <property type="entry name" value="Aldolase class I"/>
    <property type="match status" value="1"/>
</dbReference>
<dbReference type="HAMAP" id="MF_00131">
    <property type="entry name" value="Trp_synth_alpha"/>
    <property type="match status" value="1"/>
</dbReference>
<dbReference type="InterPro" id="IPR013785">
    <property type="entry name" value="Aldolase_TIM"/>
</dbReference>
<dbReference type="InterPro" id="IPR011060">
    <property type="entry name" value="RibuloseP-bd_barrel"/>
</dbReference>
<dbReference type="InterPro" id="IPR018204">
    <property type="entry name" value="Trp_synthase_alpha_AS"/>
</dbReference>
<dbReference type="InterPro" id="IPR002028">
    <property type="entry name" value="Trp_synthase_suA"/>
</dbReference>
<dbReference type="NCBIfam" id="TIGR00262">
    <property type="entry name" value="trpA"/>
    <property type="match status" value="1"/>
</dbReference>
<dbReference type="PANTHER" id="PTHR43406:SF1">
    <property type="entry name" value="TRYPTOPHAN SYNTHASE ALPHA CHAIN, CHLOROPLASTIC"/>
    <property type="match status" value="1"/>
</dbReference>
<dbReference type="PANTHER" id="PTHR43406">
    <property type="entry name" value="TRYPTOPHAN SYNTHASE, ALPHA CHAIN"/>
    <property type="match status" value="1"/>
</dbReference>
<dbReference type="Pfam" id="PF00290">
    <property type="entry name" value="Trp_syntA"/>
    <property type="match status" value="1"/>
</dbReference>
<dbReference type="SUPFAM" id="SSF51366">
    <property type="entry name" value="Ribulose-phoshate binding barrel"/>
    <property type="match status" value="1"/>
</dbReference>
<dbReference type="PROSITE" id="PS00167">
    <property type="entry name" value="TRP_SYNTHASE_ALPHA"/>
    <property type="match status" value="1"/>
</dbReference>
<feature type="chain" id="PRO_1000018161" description="Tryptophan synthase alpha chain">
    <location>
        <begin position="1"/>
        <end position="268"/>
    </location>
</feature>
<feature type="active site" description="Proton acceptor" evidence="1">
    <location>
        <position position="49"/>
    </location>
</feature>
<feature type="active site" description="Proton acceptor" evidence="1">
    <location>
        <position position="60"/>
    </location>
</feature>
<protein>
    <recommendedName>
        <fullName evidence="1">Tryptophan synthase alpha chain</fullName>
        <ecNumber evidence="1">4.2.1.20</ecNumber>
    </recommendedName>
</protein>
<gene>
    <name evidence="1" type="primary">trpA</name>
    <name type="ordered locus">AHA_2928</name>
</gene>
<evidence type="ECO:0000255" key="1">
    <source>
        <dbReference type="HAMAP-Rule" id="MF_00131"/>
    </source>
</evidence>
<name>TRPA_AERHH</name>